<comment type="function">
    <text evidence="7 9 11 12">Transcriptional corepressor that binds to a number of transcription factors (PubMed:21317240). Inhibits the transcriptional activation mediated by PAX5, and by CTNNB1 and TCF family members in Wnt signaling (PubMed:10811620). The effects of full-length TLE family members may be modulated by association with dominant-negative AES. Essential for the transcriptional repressor activity of SIX3 during retina and lens development and for SIX3 transcriptional auto-repression (PubMed:12050133). Involved in transcriptional repression of GNRHR and enhances MSX1-mediated transcriptional repression of CGA/alpha-GSU (PubMed:23371388).</text>
</comment>
<comment type="subunit">
    <text evidence="4 7 8 9 10 11">Homooligomer and heterooligomer with other family members. Interacts with PAX5 (PubMed:10811620). Interacts with LEF1, TCF7, TCF7L1 and TCF7L2 (PubMed:11266540). Interacts with ZNF703; TLE4 may mediate ZNF703 transcriptional repression (PubMed:21317240). Interacts with SIX3 and SIX6 (PubMed:12050133). Interacts with PAX2 (By similarity). Interacts with TLE1 (PubMed:16314515).</text>
</comment>
<comment type="interaction">
    <interactant intactId="EBI-2297871">
        <id>Q62441</id>
    </interactant>
    <interactant intactId="EBI-2297327">
        <id>Q62233</id>
        <label>Six3</label>
    </interactant>
    <organismsDiffer>false</organismsDiffer>
    <experiments>2</experiments>
</comment>
<comment type="subcellular location">
    <subcellularLocation>
        <location evidence="14">Nucleus</location>
    </subcellularLocation>
</comment>
<comment type="tissue specificity">
    <text evidence="13">Expressed in bone marrow-derived macrophages.</text>
</comment>
<comment type="domain">
    <text evidence="15">WD repeat Groucho/TLE family members are characterized by 5 regions, a glutamine-rich Q domain, a glycine/proline-rich GP domain, a central CcN domain, containing a nuclear localization signal, and a serine/proline-rich SP domain. The most highly conserved are the N-terminal Q domain and the C-terminal WD-repeat domain.</text>
</comment>
<comment type="PTM">
    <text evidence="7">Phosphorylated. PAX5 binding increases phosphorylation.</text>
</comment>
<comment type="PTM">
    <text evidence="1">Ubiquitinated by XIAP/BIRC4.</text>
</comment>
<comment type="similarity">
    <text evidence="14">Belongs to the WD repeat Groucho/TLE family.</text>
</comment>
<comment type="caution">
    <text evidence="14">It is uncertain whether Met-1 or Met-8 is the initiator.</text>
</comment>
<comment type="sequence caution" evidence="14">
    <conflict type="erroneous initiation">
        <sequence resource="EMBL-CDS" id="AAF43203"/>
    </conflict>
    <text>Truncated N-terminus.</text>
</comment>
<dbReference type="EMBL" id="AF229633">
    <property type="protein sequence ID" value="AAF43203.1"/>
    <property type="status" value="ALT_INIT"/>
    <property type="molecule type" value="mRNA"/>
</dbReference>
<dbReference type="EMBL" id="U61363">
    <property type="protein sequence ID" value="AAC97070.1"/>
    <property type="molecule type" value="mRNA"/>
</dbReference>
<dbReference type="CCDS" id="CCDS50399.1"/>
<dbReference type="RefSeq" id="NP_035730.2">
    <property type="nucleotide sequence ID" value="NM_011600.3"/>
</dbReference>
<dbReference type="SMR" id="Q62441"/>
<dbReference type="BioGRID" id="204219">
    <property type="interactions" value="10"/>
</dbReference>
<dbReference type="CORUM" id="Q62441"/>
<dbReference type="FunCoup" id="Q62441">
    <property type="interactions" value="3040"/>
</dbReference>
<dbReference type="IntAct" id="Q62441">
    <property type="interactions" value="3"/>
</dbReference>
<dbReference type="STRING" id="10090.ENSMUSP00000057527"/>
<dbReference type="GlyGen" id="Q62441">
    <property type="glycosylation" value="10 sites, 1 N-linked glycan (1 site), 1 O-linked glycan (6 sites)"/>
</dbReference>
<dbReference type="iPTMnet" id="Q62441"/>
<dbReference type="PhosphoSitePlus" id="Q62441"/>
<dbReference type="jPOST" id="Q62441"/>
<dbReference type="PaxDb" id="10090-ENSMUSP00000057527"/>
<dbReference type="ProteomicsDB" id="260665"/>
<dbReference type="Antibodypedia" id="27418">
    <property type="antibodies" value="272 antibodies from 29 providers"/>
</dbReference>
<dbReference type="DNASU" id="21888"/>
<dbReference type="Ensembl" id="ENSMUST00000052011.15">
    <property type="protein sequence ID" value="ENSMUSP00000057527.8"/>
    <property type="gene ID" value="ENSMUSG00000024642.19"/>
</dbReference>
<dbReference type="GeneID" id="21888"/>
<dbReference type="KEGG" id="mmu:21888"/>
<dbReference type="UCSC" id="uc008gwk.2">
    <property type="organism name" value="mouse"/>
</dbReference>
<dbReference type="AGR" id="MGI:104633"/>
<dbReference type="CTD" id="7091"/>
<dbReference type="MGI" id="MGI:104633">
    <property type="gene designation" value="Tle4"/>
</dbReference>
<dbReference type="VEuPathDB" id="HostDB:ENSMUSG00000024642"/>
<dbReference type="eggNOG" id="KOG0639">
    <property type="taxonomic scope" value="Eukaryota"/>
</dbReference>
<dbReference type="GeneTree" id="ENSGT01030000234519"/>
<dbReference type="HOGENOM" id="CLU_007612_3_0_1"/>
<dbReference type="InParanoid" id="Q62441"/>
<dbReference type="PhylomeDB" id="Q62441"/>
<dbReference type="TreeFam" id="TF314167"/>
<dbReference type="Reactome" id="R-MMU-201722">
    <property type="pathway name" value="Formation of the beta-catenin:TCF transactivating complex"/>
</dbReference>
<dbReference type="Reactome" id="R-MMU-3769402">
    <property type="pathway name" value="Deactivation of the beta-catenin transactivating complex"/>
</dbReference>
<dbReference type="Reactome" id="R-MMU-4641265">
    <property type="pathway name" value="Repression of WNT target genes"/>
</dbReference>
<dbReference type="BioGRID-ORCS" id="21888">
    <property type="hits" value="3 hits in 79 CRISPR screens"/>
</dbReference>
<dbReference type="ChiTaRS" id="Tle4">
    <property type="organism name" value="mouse"/>
</dbReference>
<dbReference type="PRO" id="PR:Q62441"/>
<dbReference type="Proteomes" id="UP000000589">
    <property type="component" value="Chromosome 19"/>
</dbReference>
<dbReference type="RNAct" id="Q62441">
    <property type="molecule type" value="protein"/>
</dbReference>
<dbReference type="Bgee" id="ENSMUSG00000024642">
    <property type="expression patterns" value="Expressed in renal corpuscle and 305 other cell types or tissues"/>
</dbReference>
<dbReference type="ExpressionAtlas" id="Q62441">
    <property type="expression patterns" value="baseline and differential"/>
</dbReference>
<dbReference type="GO" id="GO:1990907">
    <property type="term" value="C:beta-catenin-TCF complex"/>
    <property type="evidence" value="ECO:0007669"/>
    <property type="project" value="Ensembl"/>
</dbReference>
<dbReference type="GO" id="GO:0005654">
    <property type="term" value="C:nucleoplasm"/>
    <property type="evidence" value="ECO:0007669"/>
    <property type="project" value="Ensembl"/>
</dbReference>
<dbReference type="GO" id="GO:0005634">
    <property type="term" value="C:nucleus"/>
    <property type="evidence" value="ECO:0000314"/>
    <property type="project" value="UniProtKB"/>
</dbReference>
<dbReference type="GO" id="GO:0003682">
    <property type="term" value="F:chromatin binding"/>
    <property type="evidence" value="ECO:0000314"/>
    <property type="project" value="MGI"/>
</dbReference>
<dbReference type="GO" id="GO:0140297">
    <property type="term" value="F:DNA-binding transcription factor binding"/>
    <property type="evidence" value="ECO:0000353"/>
    <property type="project" value="UniProtKB"/>
</dbReference>
<dbReference type="GO" id="GO:0003714">
    <property type="term" value="F:transcription corepressor activity"/>
    <property type="evidence" value="ECO:0000314"/>
    <property type="project" value="UniProtKB"/>
</dbReference>
<dbReference type="GO" id="GO:1990830">
    <property type="term" value="P:cellular response to leukemia inhibitory factor"/>
    <property type="evidence" value="ECO:0000270"/>
    <property type="project" value="MGI"/>
</dbReference>
<dbReference type="GO" id="GO:0045892">
    <property type="term" value="P:negative regulation of DNA-templated transcription"/>
    <property type="evidence" value="ECO:0000314"/>
    <property type="project" value="UniProtKB"/>
</dbReference>
<dbReference type="GO" id="GO:0000122">
    <property type="term" value="P:negative regulation of transcription by RNA polymerase II"/>
    <property type="evidence" value="ECO:0000314"/>
    <property type="project" value="UniProtKB"/>
</dbReference>
<dbReference type="GO" id="GO:0016055">
    <property type="term" value="P:Wnt signaling pathway"/>
    <property type="evidence" value="ECO:0000314"/>
    <property type="project" value="MGI"/>
</dbReference>
<dbReference type="CDD" id="cd00200">
    <property type="entry name" value="WD40"/>
    <property type="match status" value="1"/>
</dbReference>
<dbReference type="FunFam" id="2.130.10.10:FF:000001">
    <property type="entry name" value="transducin-like enhancer protein 3 isoform X1"/>
    <property type="match status" value="1"/>
</dbReference>
<dbReference type="Gene3D" id="2.130.10.10">
    <property type="entry name" value="YVTN repeat-like/Quinoprotein amine dehydrogenase"/>
    <property type="match status" value="1"/>
</dbReference>
<dbReference type="InterPro" id="IPR005617">
    <property type="entry name" value="Groucho/TLE_N"/>
</dbReference>
<dbReference type="InterPro" id="IPR009146">
    <property type="entry name" value="Groucho_enhance"/>
</dbReference>
<dbReference type="InterPro" id="IPR015943">
    <property type="entry name" value="WD40/YVTN_repeat-like_dom_sf"/>
</dbReference>
<dbReference type="InterPro" id="IPR019775">
    <property type="entry name" value="WD40_repeat_CS"/>
</dbReference>
<dbReference type="InterPro" id="IPR036322">
    <property type="entry name" value="WD40_repeat_dom_sf"/>
</dbReference>
<dbReference type="InterPro" id="IPR001680">
    <property type="entry name" value="WD40_rpt"/>
</dbReference>
<dbReference type="PANTHER" id="PTHR10814">
    <property type="entry name" value="TRANSDUCIN-LIKE ENHANCER PROTEIN"/>
    <property type="match status" value="1"/>
</dbReference>
<dbReference type="PANTHER" id="PTHR10814:SF31">
    <property type="entry name" value="TRANSDUCIN-LIKE ENHANCER PROTEIN 4"/>
    <property type="match status" value="1"/>
</dbReference>
<dbReference type="Pfam" id="PF03920">
    <property type="entry name" value="TLE_N"/>
    <property type="match status" value="1"/>
</dbReference>
<dbReference type="Pfam" id="PF00400">
    <property type="entry name" value="WD40"/>
    <property type="match status" value="6"/>
</dbReference>
<dbReference type="PRINTS" id="PR01850">
    <property type="entry name" value="GROUCHOFAMLY"/>
</dbReference>
<dbReference type="SMART" id="SM00320">
    <property type="entry name" value="WD40"/>
    <property type="match status" value="7"/>
</dbReference>
<dbReference type="SUPFAM" id="SSF50978">
    <property type="entry name" value="WD40 repeat-like"/>
    <property type="match status" value="1"/>
</dbReference>
<dbReference type="PROSITE" id="PS00678">
    <property type="entry name" value="WD_REPEATS_1"/>
    <property type="match status" value="2"/>
</dbReference>
<dbReference type="PROSITE" id="PS50082">
    <property type="entry name" value="WD_REPEATS_2"/>
    <property type="match status" value="3"/>
</dbReference>
<dbReference type="PROSITE" id="PS50294">
    <property type="entry name" value="WD_REPEATS_REGION"/>
    <property type="match status" value="2"/>
</dbReference>
<organism>
    <name type="scientific">Mus musculus</name>
    <name type="common">Mouse</name>
    <dbReference type="NCBI Taxonomy" id="10090"/>
    <lineage>
        <taxon>Eukaryota</taxon>
        <taxon>Metazoa</taxon>
        <taxon>Chordata</taxon>
        <taxon>Craniata</taxon>
        <taxon>Vertebrata</taxon>
        <taxon>Euteleostomi</taxon>
        <taxon>Mammalia</taxon>
        <taxon>Eutheria</taxon>
        <taxon>Euarchontoglires</taxon>
        <taxon>Glires</taxon>
        <taxon>Rodentia</taxon>
        <taxon>Myomorpha</taxon>
        <taxon>Muroidea</taxon>
        <taxon>Muridae</taxon>
        <taxon>Murinae</taxon>
        <taxon>Mus</taxon>
        <taxon>Mus</taxon>
    </lineage>
</organism>
<proteinExistence type="evidence at protein level"/>
<keyword id="KW-0007">Acetylation</keyword>
<keyword id="KW-0539">Nucleus</keyword>
<keyword id="KW-0597">Phosphoprotein</keyword>
<keyword id="KW-1185">Reference proteome</keyword>
<keyword id="KW-0677">Repeat</keyword>
<keyword id="KW-0678">Repressor</keyword>
<keyword id="KW-0804">Transcription</keyword>
<keyword id="KW-0805">Transcription regulation</keyword>
<keyword id="KW-0832">Ubl conjugation</keyword>
<keyword id="KW-0853">WD repeat</keyword>
<keyword id="KW-0879">Wnt signaling pathway</keyword>
<protein>
    <recommendedName>
        <fullName>Transducin-like enhancer protein 4</fullName>
    </recommendedName>
    <alternativeName>
        <fullName>Grg-4</fullName>
    </alternativeName>
    <alternativeName>
        <fullName>Groucho-related protein 4</fullName>
    </alternativeName>
</protein>
<name>TLE4_MOUSE</name>
<accession>Q62441</accession>
<accession>Q9JKQ9</accession>
<reference key="1">
    <citation type="journal article" date="2000" name="EMBO J.">
        <title>Transcriptional repression by Pax5 (BSAP) through interaction with corepressors of the Groucho family.</title>
        <authorList>
            <person name="Eberhard D."/>
            <person name="Jimenez G."/>
            <person name="Heavey B."/>
            <person name="Busslinger M."/>
        </authorList>
    </citation>
    <scope>NUCLEOTIDE SEQUENCE [MRNA]</scope>
    <scope>FUNCTION</scope>
    <scope>INTERACTION WITH PAX5</scope>
    <scope>PHOSPHORYLATION</scope>
    <source>
        <tissue>Embryo</tissue>
    </source>
</reference>
<reference key="2">
    <citation type="journal article" date="1996" name="Mech. Dev.">
        <title>Transcripts of Grg4, a murine groucho-related gene, are detected in adjacent tissues to other murine neurogenic gene homologues during embryonic development.</title>
        <authorList>
            <person name="Koop K.E."/>
            <person name="Macdonald L.M."/>
            <person name="Lobe C.G."/>
        </authorList>
    </citation>
    <scope>NUCLEOTIDE SEQUENCE [MRNA] OF 197-773</scope>
</reference>
<reference key="3">
    <citation type="submission" date="1998-12" db="EMBL/GenBank/DDBJ databases">
        <authorList>
            <person name="Lobe C.G."/>
            <person name="Koop K.E."/>
            <person name="Macdonald L.M."/>
        </authorList>
    </citation>
    <scope>SEQUENCE REVISION</scope>
</reference>
<reference key="4">
    <citation type="journal article" date="2001" name="Nucleic Acids Res.">
        <title>All Tcf HMG box transcription factors interact with Groucho-related co-repressors.</title>
        <authorList>
            <person name="Brantjes H."/>
            <person name="Roose J."/>
            <person name="van De Wetering M."/>
            <person name="Clevers H."/>
        </authorList>
    </citation>
    <scope>INTERACTION WITH LEF1; TCF7; TCF7L1 AND TCF7L2</scope>
</reference>
<reference key="5">
    <citation type="journal article" date="2002" name="Development">
        <title>Six3-mediated auto repression and eye development requires its interaction with members of the Groucho-related family of co-repressors.</title>
        <authorList>
            <person name="Zhu C.C."/>
            <person name="Dyer M.A."/>
            <person name="Uchikawa M."/>
            <person name="Kondoh H."/>
            <person name="Lagutin O.V."/>
            <person name="Oliver G."/>
        </authorList>
    </citation>
    <scope>FUNCTION</scope>
    <scope>INTERACTION WITH SIX3 AND SIX6</scope>
</reference>
<reference key="6">
    <citation type="journal article" date="2005" name="Mol. Cell. Biol.">
        <title>Antagonistic effects of Grg6 and Groucho/TLE on the transcription repression activity of brain factor 1/FoxG1 and cortical neuron differentiation.</title>
        <authorList>
            <person name="Marcal N."/>
            <person name="Patel H."/>
            <person name="Dong Z."/>
            <person name="Belanger-Jasmin S."/>
            <person name="Hoffman B."/>
            <person name="Helgason C.D."/>
            <person name="Dang J."/>
            <person name="Stifani S."/>
        </authorList>
    </citation>
    <scope>INTERACTION WITH TLE1</scope>
</reference>
<reference key="7">
    <citation type="journal article" date="2008" name="Genome Biol.">
        <title>The Groucho/TLE/Grg family of transcriptional co-repressors.</title>
        <authorList>
            <person name="Jennings B.H."/>
            <person name="Ish-Horowicz D."/>
        </authorList>
    </citation>
    <scope>REVIEW</scope>
</reference>
<reference key="8">
    <citation type="journal article" date="2010" name="Cell">
        <title>A tissue-specific atlas of mouse protein phosphorylation and expression.</title>
        <authorList>
            <person name="Huttlin E.L."/>
            <person name="Jedrychowski M.P."/>
            <person name="Elias J.E."/>
            <person name="Goswami T."/>
            <person name="Rad R."/>
            <person name="Beausoleil S.A."/>
            <person name="Villen J."/>
            <person name="Haas W."/>
            <person name="Sowa M.E."/>
            <person name="Gygi S.P."/>
        </authorList>
    </citation>
    <scope>PHOSPHORYLATION [LARGE SCALE ANALYSIS] AT SER-292; THR-318; SER-321 AND THR-325</scope>
    <scope>IDENTIFICATION BY MASS SPECTROMETRY [LARGE SCALE ANALYSIS]</scope>
    <source>
        <tissue>Brain</tissue>
        <tissue>Testis</tissue>
    </source>
</reference>
<reference key="9">
    <citation type="journal article" date="2011" name="Genes Dev.">
        <title>Zeppo1 is a novel metastasis promoter that represses E-cadherin expression and regulates p120-catenin isoform expression and localization.</title>
        <authorList>
            <person name="Slorach E.M."/>
            <person name="Chou J."/>
            <person name="Werb Z."/>
        </authorList>
    </citation>
    <scope>FUNCTION</scope>
    <scope>INTERACTION WITH ZNF703</scope>
</reference>
<reference key="10">
    <citation type="journal article" date="2013" name="J. Biol. Chem.">
        <title>The paired-box homeodomain transcription factor Pax6 binds to the upstream region of the TRAP gene promoter and suppresses receptor activator of NF-kappaB ligand (RANKL)-induced osteoclast differentiation.</title>
        <authorList>
            <person name="Kogawa M."/>
            <person name="Hisatake K."/>
            <person name="Atkins G.J."/>
            <person name="Findlay D.M."/>
            <person name="Enoki Y."/>
            <person name="Sato T."/>
            <person name="Gray P.C."/>
            <person name="Kanesaki-Yatsuka Y."/>
            <person name="Anderson P.H."/>
            <person name="Wada S."/>
            <person name="Kato N."/>
            <person name="Fukuda A."/>
            <person name="Katayama S."/>
            <person name="Tsujimoto M."/>
            <person name="Yoda T."/>
            <person name="Suda T."/>
            <person name="Okazaki Y."/>
            <person name="Matsumoto M."/>
        </authorList>
    </citation>
    <scope>TISSUE SPECIFICITY</scope>
</reference>
<reference key="11">
    <citation type="journal article" date="2013" name="Mol. Endocrinol.">
        <title>Msx1 homeodomain protein represses the alphaGSU and GnRH receptor genes during gonadotrope development.</title>
        <authorList>
            <person name="Xie H."/>
            <person name="Cherrington B.D."/>
            <person name="Meadows J.D."/>
            <person name="Witham E.A."/>
            <person name="Mellon P.L."/>
        </authorList>
    </citation>
    <scope>FUNCTION</scope>
</reference>
<gene>
    <name type="primary">Tle4</name>
    <name type="synonym">Grg4</name>
</gene>
<feature type="chain" id="PRO_0000051284" description="Transducin-like enhancer protein 4">
    <location>
        <begin position="1"/>
        <end position="773"/>
    </location>
</feature>
<feature type="repeat" description="WD 1">
    <location>
        <begin position="485"/>
        <end position="523"/>
    </location>
</feature>
<feature type="repeat" description="WD 2">
    <location>
        <begin position="531"/>
        <end position="570"/>
    </location>
</feature>
<feature type="repeat" description="WD 3">
    <location>
        <begin position="575"/>
        <end position="614"/>
    </location>
</feature>
<feature type="repeat" description="WD 4">
    <location>
        <begin position="617"/>
        <end position="656"/>
    </location>
</feature>
<feature type="repeat" description="WD 5">
    <location>
        <begin position="658"/>
        <end position="697"/>
    </location>
</feature>
<feature type="repeat" description="WD 6">
    <location>
        <begin position="699"/>
        <end position="738"/>
    </location>
</feature>
<feature type="repeat" description="WD 7">
    <location>
        <begin position="740"/>
        <end position="773"/>
    </location>
</feature>
<feature type="region of interest" description="Q domain" evidence="4">
    <location>
        <begin position="1"/>
        <end position="136"/>
    </location>
</feature>
<feature type="region of interest" description="Disordered" evidence="6">
    <location>
        <begin position="1"/>
        <end position="22"/>
    </location>
</feature>
<feature type="region of interest" description="GP domain" evidence="4">
    <location>
        <begin position="137"/>
        <end position="204"/>
    </location>
</feature>
<feature type="region of interest" description="Disordered" evidence="6">
    <location>
        <begin position="140"/>
        <end position="162"/>
    </location>
</feature>
<feature type="region of interest" description="Disordered" evidence="6">
    <location>
        <begin position="182"/>
        <end position="357"/>
    </location>
</feature>
<feature type="region of interest" description="CcN domain" evidence="4">
    <location>
        <begin position="205"/>
        <end position="274"/>
    </location>
</feature>
<feature type="region of interest" description="SP domain" evidence="4">
    <location>
        <begin position="275"/>
        <end position="452"/>
    </location>
</feature>
<feature type="compositionally biased region" description="Basic and acidic residues" evidence="6">
    <location>
        <begin position="183"/>
        <end position="202"/>
    </location>
</feature>
<feature type="compositionally biased region" description="Low complexity" evidence="6">
    <location>
        <begin position="203"/>
        <end position="214"/>
    </location>
</feature>
<feature type="compositionally biased region" description="Basic and acidic residues" evidence="6">
    <location>
        <begin position="215"/>
        <end position="252"/>
    </location>
</feature>
<feature type="compositionally biased region" description="Basic and acidic residues" evidence="6">
    <location>
        <begin position="273"/>
        <end position="289"/>
    </location>
</feature>
<feature type="compositionally biased region" description="Low complexity" evidence="6">
    <location>
        <begin position="290"/>
        <end position="305"/>
    </location>
</feature>
<feature type="compositionally biased region" description="Polar residues" evidence="6">
    <location>
        <begin position="317"/>
        <end position="328"/>
    </location>
</feature>
<feature type="modified residue" description="Phosphoserine" evidence="4">
    <location>
        <position position="208"/>
    </location>
</feature>
<feature type="modified residue" description="Phosphoserine" evidence="3">
    <location>
        <position position="212"/>
    </location>
</feature>
<feature type="modified residue" description="Phosphoserine" evidence="3">
    <location>
        <position position="216"/>
    </location>
</feature>
<feature type="modified residue" description="Phosphoserine" evidence="3">
    <location>
        <position position="222"/>
    </location>
</feature>
<feature type="modified residue" description="N6-acetyllysine" evidence="4">
    <location>
        <position position="237"/>
    </location>
</feature>
<feature type="modified residue" description="Phosphoserine" evidence="2">
    <location>
        <position position="245"/>
    </location>
</feature>
<feature type="modified residue" description="Phosphoserine; by CK2" evidence="4 5">
    <location>
        <position position="250"/>
    </location>
</feature>
<feature type="modified residue" description="Phosphoserine; by CDK1" evidence="5">
    <location>
        <position position="265"/>
    </location>
</feature>
<feature type="modified residue" description="Phosphoserine" evidence="4">
    <location>
        <position position="269"/>
    </location>
</feature>
<feature type="modified residue" description="Phosphoserine" evidence="3">
    <location>
        <position position="273"/>
    </location>
</feature>
<feature type="modified residue" description="N6-acetyllysine" evidence="4">
    <location>
        <position position="281"/>
    </location>
</feature>
<feature type="modified residue" description="Phosphoserine" evidence="16">
    <location>
        <position position="292"/>
    </location>
</feature>
<feature type="modified residue" description="Phosphothreonine" evidence="16">
    <location>
        <position position="318"/>
    </location>
</feature>
<feature type="modified residue" description="Phosphoserine" evidence="16">
    <location>
        <position position="321"/>
    </location>
</feature>
<feature type="modified residue" description="Phosphoserine" evidence="3">
    <location>
        <position position="323"/>
    </location>
</feature>
<feature type="modified residue" description="Phosphothreonine" evidence="16">
    <location>
        <position position="325"/>
    </location>
</feature>
<feature type="modified residue" description="Phosphothreonine" evidence="3">
    <location>
        <position position="327"/>
    </location>
</feature>
<feature type="modified residue" description="Phosphothreonine" evidence="3">
    <location>
        <position position="334"/>
    </location>
</feature>
<feature type="modified residue" description="Phosphothreonine" evidence="3">
    <location>
        <position position="340"/>
    </location>
</feature>
<feature type="modified residue" description="Phosphoserine" evidence="3">
    <location>
        <position position="419"/>
    </location>
</feature>
<feature type="sequence conflict" description="In Ref. 2; AAC97070." evidence="14" ref="2">
    <original>RDR</original>
    <variation>QTN</variation>
    <location>
        <begin position="197"/>
        <end position="199"/>
    </location>
</feature>
<feature type="sequence conflict" description="In Ref. 2; AAC97070." evidence="14" ref="2">
    <original>A</original>
    <variation>R</variation>
    <location>
        <position position="405"/>
    </location>
</feature>
<feature type="sequence conflict" description="In Ref. 2; AAC97070." evidence="14" ref="2">
    <original>SA</original>
    <variation>RS</variation>
    <location>
        <begin position="454"/>
        <end position="455"/>
    </location>
</feature>
<feature type="sequence conflict" description="In Ref. 2; AAC97070." evidence="14" ref="2">
    <original>NQ</original>
    <variation>KE</variation>
    <location>
        <begin position="608"/>
        <end position="609"/>
    </location>
</feature>
<evidence type="ECO:0000250" key="1"/>
<evidence type="ECO:0000250" key="2">
    <source>
        <dbReference type="UniProtKB" id="Q04724"/>
    </source>
</evidence>
<evidence type="ECO:0000250" key="3">
    <source>
        <dbReference type="UniProtKB" id="Q04726"/>
    </source>
</evidence>
<evidence type="ECO:0000250" key="4">
    <source>
        <dbReference type="UniProtKB" id="Q04727"/>
    </source>
</evidence>
<evidence type="ECO:0000255" key="5"/>
<evidence type="ECO:0000256" key="6">
    <source>
        <dbReference type="SAM" id="MobiDB-lite"/>
    </source>
</evidence>
<evidence type="ECO:0000269" key="7">
    <source>
    </source>
</evidence>
<evidence type="ECO:0000269" key="8">
    <source>
    </source>
</evidence>
<evidence type="ECO:0000269" key="9">
    <source>
    </source>
</evidence>
<evidence type="ECO:0000269" key="10">
    <source>
    </source>
</evidence>
<evidence type="ECO:0000269" key="11">
    <source>
    </source>
</evidence>
<evidence type="ECO:0000269" key="12">
    <source>
    </source>
</evidence>
<evidence type="ECO:0000269" key="13">
    <source>
    </source>
</evidence>
<evidence type="ECO:0000305" key="14"/>
<evidence type="ECO:0000305" key="15">
    <source>
    </source>
</evidence>
<evidence type="ECO:0007744" key="16">
    <source>
    </source>
</evidence>
<sequence length="773" mass="83787">MIRDLSKMYPQTRHPAPHQPAQPFKFTISESCDRIKEEFQFLQAQYHSLKLECEKLASEKTEMQRHYVMYYEMSYGLNIEMHKQAEIVKRLNAICAQVIPFLSQEHQQQVVQAVERAKQVTMAELNAIIGQQLQAQHLSHGHGLPVPLTPHPSGLQPPAIPPIGSSAGLLALSSALGGQSHLPIKDEKKHHDNDHQRDRDSIKSSSVSPSASFRGSEKHRNSTDYSSESKKQKTEEKEIAARYDSDGEKSDDNLVVDVSNEDPSSPRGSPAHSPRENGLDKTRLLKKDAPISPASVASSSSTPSSKSKELSLNEKSTTPVSKSNTPTPRTDAPTPGSNSTPGLRPVPGKPPGVDPLASSLRTPMAVPCPYPTPFGIVPHAGMNGELTSPGAAYAGLHNISPQMSAAAAAAAAAAAYGRSPVVGFDPHHHMRVPAIPPNLTGIPGGKPAYSFHVSADGQMQPVPFPPDALIGPGIPRHARQINTLNHGEVVCAVTISNPTRHVYTGGKGCVKVWDISHPGNKSPVSQLDCLNRDNYIRSCRLLPDGRTLIVGGEASTLSIWDLAAPTPRIKAELTSSAPACYALAISPDSKVCFSCCSDGNIAVWDLHNQTLVRQFQGHTDGASCIDISNDGTKLWTGGLDNTVRSWDLREGRQLQQHDFTSQIFSLGYCPTGEWLAVGMENSNVEVLHVTKPDKYQLHLHESCVLSLKFAHCGKWFVSTGKDNLLNAWRTPYGASIFQSKESSSVLSCDISVDDKYIVTGSGDKKATVYEVIY</sequence>